<organism>
    <name type="scientific">Oryza sativa subsp. japonica</name>
    <name type="common">Rice</name>
    <dbReference type="NCBI Taxonomy" id="39947"/>
    <lineage>
        <taxon>Eukaryota</taxon>
        <taxon>Viridiplantae</taxon>
        <taxon>Streptophyta</taxon>
        <taxon>Embryophyta</taxon>
        <taxon>Tracheophyta</taxon>
        <taxon>Spermatophyta</taxon>
        <taxon>Magnoliopsida</taxon>
        <taxon>Liliopsida</taxon>
        <taxon>Poales</taxon>
        <taxon>Poaceae</taxon>
        <taxon>BOP clade</taxon>
        <taxon>Oryzoideae</taxon>
        <taxon>Oryzeae</taxon>
        <taxon>Oryzinae</taxon>
        <taxon>Oryza</taxon>
        <taxon>Oryza sativa</taxon>
    </lineage>
</organism>
<name>CDKC2_ORYSJ</name>
<feature type="chain" id="PRO_0000296101" description="Cyclin-dependent kinase C-2">
    <location>
        <begin position="1"/>
        <end position="513"/>
    </location>
</feature>
<feature type="domain" description="Protein kinase" evidence="2">
    <location>
        <begin position="25"/>
        <end position="325"/>
    </location>
</feature>
<feature type="region of interest" description="Disordered" evidence="4">
    <location>
        <begin position="336"/>
        <end position="513"/>
    </location>
</feature>
<feature type="compositionally biased region" description="Basic and acidic residues" evidence="4">
    <location>
        <begin position="336"/>
        <end position="348"/>
    </location>
</feature>
<feature type="compositionally biased region" description="Low complexity" evidence="4">
    <location>
        <begin position="417"/>
        <end position="433"/>
    </location>
</feature>
<feature type="compositionally biased region" description="Gly residues" evidence="4">
    <location>
        <begin position="457"/>
        <end position="478"/>
    </location>
</feature>
<feature type="compositionally biased region" description="Gly residues" evidence="4">
    <location>
        <begin position="485"/>
        <end position="494"/>
    </location>
</feature>
<feature type="compositionally biased region" description="Polar residues" evidence="4">
    <location>
        <begin position="497"/>
        <end position="513"/>
    </location>
</feature>
<feature type="active site" description="Proton acceptor" evidence="2 3">
    <location>
        <position position="164"/>
    </location>
</feature>
<feature type="binding site" evidence="2">
    <location>
        <begin position="31"/>
        <end position="39"/>
    </location>
    <ligand>
        <name>ATP</name>
        <dbReference type="ChEBI" id="CHEBI:30616"/>
    </ligand>
</feature>
<feature type="binding site" evidence="2">
    <location>
        <position position="54"/>
    </location>
    <ligand>
        <name>ATP</name>
        <dbReference type="ChEBI" id="CHEBI:30616"/>
    </ligand>
</feature>
<feature type="modified residue" description="Phosphothreonine" evidence="1">
    <location>
        <position position="35"/>
    </location>
</feature>
<feature type="modified residue" description="Phosphotyrosine" evidence="1">
    <location>
        <position position="36"/>
    </location>
</feature>
<feature type="modified residue" description="Phosphoserine" evidence="1">
    <location>
        <position position="191"/>
    </location>
</feature>
<feature type="modified residue" description="Phosphothreonine" evidence="1">
    <location>
        <position position="198"/>
    </location>
</feature>
<gene>
    <name type="primary">CDKC-2</name>
    <name type="synonym">CDKC1</name>
    <name type="ordered locus">Os01g0958000</name>
    <name type="ordered locus">LOC_Os01g72790</name>
    <name type="ORF">OJ1294_F06.25</name>
    <name evidence="7" type="ORF">OsJ_04825</name>
</gene>
<dbReference type="EC" id="2.7.11.22"/>
<dbReference type="EC" id="2.7.11.23"/>
<dbReference type="EMBL" id="AJ512410">
    <property type="protein sequence ID" value="CAD54641.1"/>
    <property type="status" value="ALT_FRAME"/>
    <property type="molecule type" value="mRNA"/>
</dbReference>
<dbReference type="EMBL" id="AJ564977">
    <property type="protein sequence ID" value="CAD92448.1"/>
    <property type="status" value="ALT_FRAME"/>
    <property type="molecule type" value="mRNA"/>
</dbReference>
<dbReference type="EMBL" id="AP004326">
    <property type="protein sequence ID" value="BAD88154.1"/>
    <property type="molecule type" value="Genomic_DNA"/>
</dbReference>
<dbReference type="EMBL" id="AP008207">
    <property type="protein sequence ID" value="BAF07364.1"/>
    <property type="molecule type" value="Genomic_DNA"/>
</dbReference>
<dbReference type="EMBL" id="AP014957">
    <property type="protein sequence ID" value="BAS76301.1"/>
    <property type="molecule type" value="Genomic_DNA"/>
</dbReference>
<dbReference type="EMBL" id="CM000138">
    <property type="protein sequence ID" value="EEE56036.1"/>
    <property type="molecule type" value="Genomic_DNA"/>
</dbReference>
<dbReference type="SMR" id="Q5JK68"/>
<dbReference type="FunCoup" id="Q5JK68">
    <property type="interactions" value="2904"/>
</dbReference>
<dbReference type="STRING" id="39947.Q5JK68"/>
<dbReference type="PaxDb" id="39947-Q5JK68"/>
<dbReference type="EnsemblPlants" id="Os01t0958000-01">
    <property type="protein sequence ID" value="Os01t0958000-01"/>
    <property type="gene ID" value="Os01g0958000"/>
</dbReference>
<dbReference type="Gramene" id="Os01t0958000-01">
    <property type="protein sequence ID" value="Os01t0958000-01"/>
    <property type="gene ID" value="Os01g0958000"/>
</dbReference>
<dbReference type="KEGG" id="dosa:Os01g0958000"/>
<dbReference type="eggNOG" id="KOG0600">
    <property type="taxonomic scope" value="Eukaryota"/>
</dbReference>
<dbReference type="HOGENOM" id="CLU_000288_181_1_1"/>
<dbReference type="InParanoid" id="Q5JK68"/>
<dbReference type="OMA" id="DALDHDY"/>
<dbReference type="Proteomes" id="UP000000763">
    <property type="component" value="Chromosome 1"/>
</dbReference>
<dbReference type="Proteomes" id="UP000007752">
    <property type="component" value="Chromosome 1"/>
</dbReference>
<dbReference type="Proteomes" id="UP000059680">
    <property type="component" value="Chromosome 1"/>
</dbReference>
<dbReference type="ExpressionAtlas" id="Q5JK68">
    <property type="expression patterns" value="baseline and differential"/>
</dbReference>
<dbReference type="GO" id="GO:0000307">
    <property type="term" value="C:cyclin-dependent protein kinase holoenzyme complex"/>
    <property type="evidence" value="ECO:0000318"/>
    <property type="project" value="GO_Central"/>
</dbReference>
<dbReference type="GO" id="GO:0005634">
    <property type="term" value="C:nucleus"/>
    <property type="evidence" value="ECO:0000318"/>
    <property type="project" value="GO_Central"/>
</dbReference>
<dbReference type="GO" id="GO:0005524">
    <property type="term" value="F:ATP binding"/>
    <property type="evidence" value="ECO:0007669"/>
    <property type="project" value="UniProtKB-KW"/>
</dbReference>
<dbReference type="GO" id="GO:0004693">
    <property type="term" value="F:cyclin-dependent protein serine/threonine kinase activity"/>
    <property type="evidence" value="ECO:0007669"/>
    <property type="project" value="UniProtKB-EC"/>
</dbReference>
<dbReference type="GO" id="GO:0106310">
    <property type="term" value="F:protein serine kinase activity"/>
    <property type="evidence" value="ECO:0007669"/>
    <property type="project" value="RHEA"/>
</dbReference>
<dbReference type="GO" id="GO:0008353">
    <property type="term" value="F:RNA polymerase II CTD heptapeptide repeat kinase activity"/>
    <property type="evidence" value="ECO:0000318"/>
    <property type="project" value="GO_Central"/>
</dbReference>
<dbReference type="GO" id="GO:0032968">
    <property type="term" value="P:positive regulation of transcription elongation by RNA polymerase II"/>
    <property type="evidence" value="ECO:0000318"/>
    <property type="project" value="GO_Central"/>
</dbReference>
<dbReference type="CDD" id="cd07840">
    <property type="entry name" value="STKc_CDK9_like"/>
    <property type="match status" value="1"/>
</dbReference>
<dbReference type="FunFam" id="1.10.510.10:FF:000273">
    <property type="entry name" value="Cyclin-dependent kinase C-2"/>
    <property type="match status" value="1"/>
</dbReference>
<dbReference type="FunFam" id="3.30.200.20:FF:000272">
    <property type="entry name" value="Cyclin-dependent kinase C-2"/>
    <property type="match status" value="1"/>
</dbReference>
<dbReference type="Gene3D" id="3.30.200.20">
    <property type="entry name" value="Phosphorylase Kinase, domain 1"/>
    <property type="match status" value="1"/>
</dbReference>
<dbReference type="Gene3D" id="1.10.510.10">
    <property type="entry name" value="Transferase(Phosphotransferase) domain 1"/>
    <property type="match status" value="1"/>
</dbReference>
<dbReference type="InterPro" id="IPR050108">
    <property type="entry name" value="CDK"/>
</dbReference>
<dbReference type="InterPro" id="IPR011009">
    <property type="entry name" value="Kinase-like_dom_sf"/>
</dbReference>
<dbReference type="InterPro" id="IPR000719">
    <property type="entry name" value="Prot_kinase_dom"/>
</dbReference>
<dbReference type="InterPro" id="IPR017441">
    <property type="entry name" value="Protein_kinase_ATP_BS"/>
</dbReference>
<dbReference type="InterPro" id="IPR008271">
    <property type="entry name" value="Ser/Thr_kinase_AS"/>
</dbReference>
<dbReference type="PANTHER" id="PTHR24056">
    <property type="entry name" value="CELL DIVISION PROTEIN KINASE"/>
    <property type="match status" value="1"/>
</dbReference>
<dbReference type="PANTHER" id="PTHR24056:SF546">
    <property type="entry name" value="CYCLIN-DEPENDENT KINASE 12"/>
    <property type="match status" value="1"/>
</dbReference>
<dbReference type="Pfam" id="PF00069">
    <property type="entry name" value="Pkinase"/>
    <property type="match status" value="1"/>
</dbReference>
<dbReference type="SMART" id="SM00220">
    <property type="entry name" value="S_TKc"/>
    <property type="match status" value="1"/>
</dbReference>
<dbReference type="SUPFAM" id="SSF56112">
    <property type="entry name" value="Protein kinase-like (PK-like)"/>
    <property type="match status" value="1"/>
</dbReference>
<dbReference type="PROSITE" id="PS00107">
    <property type="entry name" value="PROTEIN_KINASE_ATP"/>
    <property type="match status" value="1"/>
</dbReference>
<dbReference type="PROSITE" id="PS50011">
    <property type="entry name" value="PROTEIN_KINASE_DOM"/>
    <property type="match status" value="1"/>
</dbReference>
<dbReference type="PROSITE" id="PS00108">
    <property type="entry name" value="PROTEIN_KINASE_ST"/>
    <property type="match status" value="1"/>
</dbReference>
<accession>Q5JK68</accession>
<accession>B9EWJ5</accession>
<accession>Q5K4U5</accession>
<accession>Q7Y0V2</accession>
<evidence type="ECO:0000250" key="1"/>
<evidence type="ECO:0000255" key="2">
    <source>
        <dbReference type="PROSITE-ProRule" id="PRU00159"/>
    </source>
</evidence>
<evidence type="ECO:0000255" key="3">
    <source>
        <dbReference type="PROSITE-ProRule" id="PRU10027"/>
    </source>
</evidence>
<evidence type="ECO:0000256" key="4">
    <source>
        <dbReference type="SAM" id="MobiDB-lite"/>
    </source>
</evidence>
<evidence type="ECO:0000269" key="5">
    <source>
    </source>
</evidence>
<evidence type="ECO:0000305" key="6"/>
<evidence type="ECO:0000312" key="7">
    <source>
        <dbReference type="EMBL" id="EEE56036.1"/>
    </source>
</evidence>
<comment type="catalytic activity">
    <reaction>
        <text>L-seryl-[protein] + ATP = O-phospho-L-seryl-[protein] + ADP + H(+)</text>
        <dbReference type="Rhea" id="RHEA:17989"/>
        <dbReference type="Rhea" id="RHEA-COMP:9863"/>
        <dbReference type="Rhea" id="RHEA-COMP:11604"/>
        <dbReference type="ChEBI" id="CHEBI:15378"/>
        <dbReference type="ChEBI" id="CHEBI:29999"/>
        <dbReference type="ChEBI" id="CHEBI:30616"/>
        <dbReference type="ChEBI" id="CHEBI:83421"/>
        <dbReference type="ChEBI" id="CHEBI:456216"/>
        <dbReference type="EC" id="2.7.11.22"/>
    </reaction>
</comment>
<comment type="catalytic activity">
    <reaction>
        <text>L-threonyl-[protein] + ATP = O-phospho-L-threonyl-[protein] + ADP + H(+)</text>
        <dbReference type="Rhea" id="RHEA:46608"/>
        <dbReference type="Rhea" id="RHEA-COMP:11060"/>
        <dbReference type="Rhea" id="RHEA-COMP:11605"/>
        <dbReference type="ChEBI" id="CHEBI:15378"/>
        <dbReference type="ChEBI" id="CHEBI:30013"/>
        <dbReference type="ChEBI" id="CHEBI:30616"/>
        <dbReference type="ChEBI" id="CHEBI:61977"/>
        <dbReference type="ChEBI" id="CHEBI:456216"/>
        <dbReference type="EC" id="2.7.11.22"/>
    </reaction>
</comment>
<comment type="catalytic activity">
    <reaction>
        <text>[DNA-directed RNA polymerase] + ATP = phospho-[DNA-directed RNA polymerase] + ADP + H(+)</text>
        <dbReference type="Rhea" id="RHEA:10216"/>
        <dbReference type="Rhea" id="RHEA-COMP:11321"/>
        <dbReference type="Rhea" id="RHEA-COMP:11322"/>
        <dbReference type="ChEBI" id="CHEBI:15378"/>
        <dbReference type="ChEBI" id="CHEBI:30616"/>
        <dbReference type="ChEBI" id="CHEBI:43176"/>
        <dbReference type="ChEBI" id="CHEBI:68546"/>
        <dbReference type="ChEBI" id="CHEBI:456216"/>
        <dbReference type="EC" id="2.7.11.23"/>
    </reaction>
</comment>
<comment type="induction">
    <text evidence="5">Down-regulated by cytokinin.</text>
</comment>
<comment type="similarity">
    <text evidence="6">Belongs to the protein kinase superfamily. CMGC Ser/Thr protein kinase family. CDC2/CDKX subfamily.</text>
</comment>
<comment type="sequence caution" evidence="6">
    <conflict type="frameshift">
        <sequence resource="EMBL-CDS" id="CAD54641"/>
    </conflict>
</comment>
<comment type="sequence caution" evidence="6">
    <conflict type="frameshift">
        <sequence resource="EMBL-CDS" id="CAD92448"/>
    </conflict>
</comment>
<sequence length="513" mass="56826">MAVAAPGQLNLDESPSWGSRSVDCFEKLEQIGEGTYGQVYMAKETETNEIVALKKIRMDNEREGFPITAIREIKILKKLHHQNVIQLKEIVTSPGPERDEQGKPIEGNKYKGSIYMVFEYMDHDLTGLADRPGMRFTVPQIKCYMRQLLTGLHYCHVNQVLHRDIKGSNLLIDNEGNLKLADFGLARSFSSDHNGNLTNRVITLWYRPPELLLGSTRYGPAVDMWSVGCIFAELLNGKPILTGKNEPEQLSKIFELCGTPDELIWPGVTKMPWYNNFKPQRPMKRRVKESFKHFDQHALDLLEKMLTLDPSQRISAKDALDAEYFWTDPLPCDPKSLPKYEASHEFQTKKKRQQQRQAEEAAKRQKLQHPPPHSRLPPIQNPGQPHQIRPGQPMHNAPPVAAGPSHHYAKPRGPGGPNRYPQGGNQGGYNPNRGGQGGGYGSGPYPQQGRGPPPYPGGGMGGAGGPRGGGGSGYGVGGPNYQQGGPYGASGPGRGPNYNQGGSRNQQQYGNWQ</sequence>
<reference key="1">
    <citation type="submission" date="2003-06" db="EMBL/GenBank/DDBJ databases">
        <title>Identification of a novel developmentally regulated C type cyclin-dependent kinase in rice plants.</title>
        <authorList>
            <person name="Huang Y.W."/>
            <person name="Huang H.J."/>
        </authorList>
    </citation>
    <scope>NUCLEOTIDE SEQUENCE [MRNA]</scope>
</reference>
<reference key="2">
    <citation type="journal article" date="2002" name="Nature">
        <title>The genome sequence and structure of rice chromosome 1.</title>
        <authorList>
            <person name="Sasaki T."/>
            <person name="Matsumoto T."/>
            <person name="Yamamoto K."/>
            <person name="Sakata K."/>
            <person name="Baba T."/>
            <person name="Katayose Y."/>
            <person name="Wu J."/>
            <person name="Niimura Y."/>
            <person name="Cheng Z."/>
            <person name="Nagamura Y."/>
            <person name="Antonio B.A."/>
            <person name="Kanamori H."/>
            <person name="Hosokawa S."/>
            <person name="Masukawa M."/>
            <person name="Arikawa K."/>
            <person name="Chiden Y."/>
            <person name="Hayashi M."/>
            <person name="Okamoto M."/>
            <person name="Ando T."/>
            <person name="Aoki H."/>
            <person name="Arita K."/>
            <person name="Hamada M."/>
            <person name="Harada C."/>
            <person name="Hijishita S."/>
            <person name="Honda M."/>
            <person name="Ichikawa Y."/>
            <person name="Idonuma A."/>
            <person name="Iijima M."/>
            <person name="Ikeda M."/>
            <person name="Ikeno M."/>
            <person name="Ito S."/>
            <person name="Ito T."/>
            <person name="Ito Y."/>
            <person name="Ito Y."/>
            <person name="Iwabuchi A."/>
            <person name="Kamiya K."/>
            <person name="Karasawa W."/>
            <person name="Katagiri S."/>
            <person name="Kikuta A."/>
            <person name="Kobayashi N."/>
            <person name="Kono I."/>
            <person name="Machita K."/>
            <person name="Maehara T."/>
            <person name="Mizuno H."/>
            <person name="Mizubayashi T."/>
            <person name="Mukai Y."/>
            <person name="Nagasaki H."/>
            <person name="Nakashima M."/>
            <person name="Nakama Y."/>
            <person name="Nakamichi Y."/>
            <person name="Nakamura M."/>
            <person name="Namiki N."/>
            <person name="Negishi M."/>
            <person name="Ohta I."/>
            <person name="Ono N."/>
            <person name="Saji S."/>
            <person name="Sakai K."/>
            <person name="Shibata M."/>
            <person name="Shimokawa T."/>
            <person name="Shomura A."/>
            <person name="Song J."/>
            <person name="Takazaki Y."/>
            <person name="Terasawa K."/>
            <person name="Tsuji K."/>
            <person name="Waki K."/>
            <person name="Yamagata H."/>
            <person name="Yamane H."/>
            <person name="Yoshiki S."/>
            <person name="Yoshihara R."/>
            <person name="Yukawa K."/>
            <person name="Zhong H."/>
            <person name="Iwama H."/>
            <person name="Endo T."/>
            <person name="Ito H."/>
            <person name="Hahn J.H."/>
            <person name="Kim H.-I."/>
            <person name="Eun M.-Y."/>
            <person name="Yano M."/>
            <person name="Jiang J."/>
            <person name="Gojobori T."/>
        </authorList>
    </citation>
    <scope>NUCLEOTIDE SEQUENCE [LARGE SCALE GENOMIC DNA]</scope>
    <source>
        <strain>cv. Nipponbare</strain>
    </source>
</reference>
<reference key="3">
    <citation type="journal article" date="2005" name="Nature">
        <title>The map-based sequence of the rice genome.</title>
        <authorList>
            <consortium name="International rice genome sequencing project (IRGSP)"/>
        </authorList>
    </citation>
    <scope>NUCLEOTIDE SEQUENCE [LARGE SCALE GENOMIC DNA]</scope>
    <source>
        <strain>cv. Nipponbare</strain>
    </source>
</reference>
<reference key="4">
    <citation type="journal article" date="2008" name="Nucleic Acids Res.">
        <title>The rice annotation project database (RAP-DB): 2008 update.</title>
        <authorList>
            <consortium name="The rice annotation project (RAP)"/>
        </authorList>
    </citation>
    <scope>GENOME REANNOTATION</scope>
    <source>
        <strain>cv. Nipponbare</strain>
    </source>
</reference>
<reference key="5">
    <citation type="journal article" date="2013" name="Rice">
        <title>Improvement of the Oryza sativa Nipponbare reference genome using next generation sequence and optical map data.</title>
        <authorList>
            <person name="Kawahara Y."/>
            <person name="de la Bastide M."/>
            <person name="Hamilton J.P."/>
            <person name="Kanamori H."/>
            <person name="McCombie W.R."/>
            <person name="Ouyang S."/>
            <person name="Schwartz D.C."/>
            <person name="Tanaka T."/>
            <person name="Wu J."/>
            <person name="Zhou S."/>
            <person name="Childs K.L."/>
            <person name="Davidson R.M."/>
            <person name="Lin H."/>
            <person name="Quesada-Ocampo L."/>
            <person name="Vaillancourt B."/>
            <person name="Sakai H."/>
            <person name="Lee S.S."/>
            <person name="Kim J."/>
            <person name="Numa H."/>
            <person name="Itoh T."/>
            <person name="Buell C.R."/>
            <person name="Matsumoto T."/>
        </authorList>
    </citation>
    <scope>GENOME REANNOTATION</scope>
    <source>
        <strain>cv. Nipponbare</strain>
    </source>
</reference>
<reference key="6">
    <citation type="journal article" date="2005" name="PLoS Biol.">
        <title>The genomes of Oryza sativa: a history of duplications.</title>
        <authorList>
            <person name="Yu J."/>
            <person name="Wang J."/>
            <person name="Lin W."/>
            <person name="Li S."/>
            <person name="Li H."/>
            <person name="Zhou J."/>
            <person name="Ni P."/>
            <person name="Dong W."/>
            <person name="Hu S."/>
            <person name="Zeng C."/>
            <person name="Zhang J."/>
            <person name="Zhang Y."/>
            <person name="Li R."/>
            <person name="Xu Z."/>
            <person name="Li S."/>
            <person name="Li X."/>
            <person name="Zheng H."/>
            <person name="Cong L."/>
            <person name="Lin L."/>
            <person name="Yin J."/>
            <person name="Geng J."/>
            <person name="Li G."/>
            <person name="Shi J."/>
            <person name="Liu J."/>
            <person name="Lv H."/>
            <person name="Li J."/>
            <person name="Wang J."/>
            <person name="Deng Y."/>
            <person name="Ran L."/>
            <person name="Shi X."/>
            <person name="Wang X."/>
            <person name="Wu Q."/>
            <person name="Li C."/>
            <person name="Ren X."/>
            <person name="Wang J."/>
            <person name="Wang X."/>
            <person name="Li D."/>
            <person name="Liu D."/>
            <person name="Zhang X."/>
            <person name="Ji Z."/>
            <person name="Zhao W."/>
            <person name="Sun Y."/>
            <person name="Zhang Z."/>
            <person name="Bao J."/>
            <person name="Han Y."/>
            <person name="Dong L."/>
            <person name="Ji J."/>
            <person name="Chen P."/>
            <person name="Wu S."/>
            <person name="Liu J."/>
            <person name="Xiao Y."/>
            <person name="Bu D."/>
            <person name="Tan J."/>
            <person name="Yang L."/>
            <person name="Ye C."/>
            <person name="Zhang J."/>
            <person name="Xu J."/>
            <person name="Zhou Y."/>
            <person name="Yu Y."/>
            <person name="Zhang B."/>
            <person name="Zhuang S."/>
            <person name="Wei H."/>
            <person name="Liu B."/>
            <person name="Lei M."/>
            <person name="Yu H."/>
            <person name="Li Y."/>
            <person name="Xu H."/>
            <person name="Wei S."/>
            <person name="He X."/>
            <person name="Fang L."/>
            <person name="Zhang Z."/>
            <person name="Zhang Y."/>
            <person name="Huang X."/>
            <person name="Su Z."/>
            <person name="Tong W."/>
            <person name="Li J."/>
            <person name="Tong Z."/>
            <person name="Li S."/>
            <person name="Ye J."/>
            <person name="Wang L."/>
            <person name="Fang L."/>
            <person name="Lei T."/>
            <person name="Chen C.-S."/>
            <person name="Chen H.-C."/>
            <person name="Xu Z."/>
            <person name="Li H."/>
            <person name="Huang H."/>
            <person name="Zhang F."/>
            <person name="Xu H."/>
            <person name="Li N."/>
            <person name="Zhao C."/>
            <person name="Li S."/>
            <person name="Dong L."/>
            <person name="Huang Y."/>
            <person name="Li L."/>
            <person name="Xi Y."/>
            <person name="Qi Q."/>
            <person name="Li W."/>
            <person name="Zhang B."/>
            <person name="Hu W."/>
            <person name="Zhang Y."/>
            <person name="Tian X."/>
            <person name="Jiao Y."/>
            <person name="Liang X."/>
            <person name="Jin J."/>
            <person name="Gao L."/>
            <person name="Zheng W."/>
            <person name="Hao B."/>
            <person name="Liu S.-M."/>
            <person name="Wang W."/>
            <person name="Yuan L."/>
            <person name="Cao M."/>
            <person name="McDermott J."/>
            <person name="Samudrala R."/>
            <person name="Wang J."/>
            <person name="Wong G.K.-S."/>
            <person name="Yang H."/>
        </authorList>
    </citation>
    <scope>NUCLEOTIDE SEQUENCE [LARGE SCALE GENOMIC DNA]</scope>
    <source>
        <strain>cv. Nipponbare</strain>
    </source>
</reference>
<reference key="7">
    <citation type="journal article" date="2007" name="Plant Mol. Biol.">
        <title>Genome-wide identification and expression analysis of rice cell cycle genes.</title>
        <authorList>
            <person name="Guo J."/>
            <person name="Song J."/>
            <person name="Wang F."/>
            <person name="Zhang X.S."/>
        </authorList>
    </citation>
    <scope>INDUCTION</scope>
    <scope>GENE FAMILY</scope>
</reference>
<protein>
    <recommendedName>
        <fullName>Cyclin-dependent kinase C-2</fullName>
        <shortName>CDKC;2</shortName>
        <ecNumber>2.7.11.22</ecNumber>
        <ecNumber>2.7.11.23</ecNumber>
    </recommendedName>
</protein>
<proteinExistence type="evidence at transcript level"/>
<keyword id="KW-0067">ATP-binding</keyword>
<keyword id="KW-0418">Kinase</keyword>
<keyword id="KW-0547">Nucleotide-binding</keyword>
<keyword id="KW-0597">Phosphoprotein</keyword>
<keyword id="KW-1185">Reference proteome</keyword>
<keyword id="KW-0723">Serine/threonine-protein kinase</keyword>
<keyword id="KW-0808">Transferase</keyword>